<name>HSPE_BRADU</name>
<evidence type="ECO:0000255" key="1">
    <source>
        <dbReference type="PROSITE-ProRule" id="PRU00285"/>
    </source>
</evidence>
<proteinExistence type="inferred from homology"/>
<accession>O69242</accession>
<comment type="similarity">
    <text evidence="1">Belongs to the small heat shock protein (HSP20) family.</text>
</comment>
<feature type="chain" id="PRO_0000126046" description="Small heat shock protein HspE">
    <location>
        <begin position="1"/>
        <end position="150"/>
    </location>
</feature>
<feature type="domain" description="sHSP" evidence="1">
    <location>
        <begin position="27"/>
        <end position="137"/>
    </location>
</feature>
<keyword id="KW-1185">Reference proteome</keyword>
<keyword id="KW-0346">Stress response</keyword>
<organism>
    <name type="scientific">Bradyrhizobium diazoefficiens (strain JCM 10833 / BCRC 13528 / IAM 13628 / NBRC 14792 / USDA 110)</name>
    <dbReference type="NCBI Taxonomy" id="224911"/>
    <lineage>
        <taxon>Bacteria</taxon>
        <taxon>Pseudomonadati</taxon>
        <taxon>Pseudomonadota</taxon>
        <taxon>Alphaproteobacteria</taxon>
        <taxon>Hyphomicrobiales</taxon>
        <taxon>Nitrobacteraceae</taxon>
        <taxon>Bradyrhizobium</taxon>
    </lineage>
</organism>
<protein>
    <recommendedName>
        <fullName>Small heat shock protein HspE</fullName>
    </recommendedName>
</protein>
<gene>
    <name type="primary">hspE</name>
    <name type="ordered locus">blr5220</name>
</gene>
<dbReference type="EMBL" id="AJ003064">
    <property type="protein sequence ID" value="CAA05836.1"/>
    <property type="molecule type" value="Genomic_DNA"/>
</dbReference>
<dbReference type="EMBL" id="BA000040">
    <property type="protein sequence ID" value="BAC50485.1"/>
    <property type="molecule type" value="Genomic_DNA"/>
</dbReference>
<dbReference type="RefSeq" id="NP_771860.1">
    <property type="nucleotide sequence ID" value="NC_004463.1"/>
</dbReference>
<dbReference type="RefSeq" id="WP_011087976.1">
    <property type="nucleotide sequence ID" value="NC_004463.1"/>
</dbReference>
<dbReference type="SMR" id="O69242"/>
<dbReference type="STRING" id="224911.AAV28_23485"/>
<dbReference type="EnsemblBacteria" id="BAC50485">
    <property type="protein sequence ID" value="BAC50485"/>
    <property type="gene ID" value="BAC50485"/>
</dbReference>
<dbReference type="GeneID" id="46492218"/>
<dbReference type="KEGG" id="bja:blr5220"/>
<dbReference type="PATRIC" id="fig|224911.44.peg.5107"/>
<dbReference type="eggNOG" id="COG0071">
    <property type="taxonomic scope" value="Bacteria"/>
</dbReference>
<dbReference type="HOGENOM" id="CLU_046737_4_2_5"/>
<dbReference type="InParanoid" id="O69242"/>
<dbReference type="OrthoDB" id="5242916at2"/>
<dbReference type="PhylomeDB" id="O69242"/>
<dbReference type="Proteomes" id="UP000002526">
    <property type="component" value="Chromosome"/>
</dbReference>
<dbReference type="GO" id="GO:0005737">
    <property type="term" value="C:cytoplasm"/>
    <property type="evidence" value="ECO:0000318"/>
    <property type="project" value="GO_Central"/>
</dbReference>
<dbReference type="CDD" id="cd06470">
    <property type="entry name" value="ACD_IbpA-B_like"/>
    <property type="match status" value="1"/>
</dbReference>
<dbReference type="Gene3D" id="2.60.40.790">
    <property type="match status" value="1"/>
</dbReference>
<dbReference type="InterPro" id="IPR002068">
    <property type="entry name" value="A-crystallin/Hsp20_dom"/>
</dbReference>
<dbReference type="InterPro" id="IPR037913">
    <property type="entry name" value="ACD_IbpA/B"/>
</dbReference>
<dbReference type="InterPro" id="IPR008978">
    <property type="entry name" value="HSP20-like_chaperone"/>
</dbReference>
<dbReference type="PANTHER" id="PTHR47062">
    <property type="match status" value="1"/>
</dbReference>
<dbReference type="PANTHER" id="PTHR47062:SF1">
    <property type="entry name" value="SMALL HEAT SHOCK PROTEIN IBPA"/>
    <property type="match status" value="1"/>
</dbReference>
<dbReference type="Pfam" id="PF00011">
    <property type="entry name" value="HSP20"/>
    <property type="match status" value="1"/>
</dbReference>
<dbReference type="SUPFAM" id="SSF49764">
    <property type="entry name" value="HSP20-like chaperones"/>
    <property type="match status" value="1"/>
</dbReference>
<dbReference type="PROSITE" id="PS01031">
    <property type="entry name" value="SHSP"/>
    <property type="match status" value="1"/>
</dbReference>
<sequence length="150" mass="17238">MRTYDLSPFWRSTIGFDRLLNLVNDTVDNGDTYPPYDIERTSEDQYRISLALVGFTPDDVAITAERSTLTVEGRKTDEDERDYLYRGISVRPFRRVFNLADYVQVKDATFEDGLLKIALTREMPEALKPRQIAIDVAGNDHQRSDRTQAA</sequence>
<reference key="1">
    <citation type="journal article" date="1998" name="Arch. Microbiol.">
        <title>Identification of the Bradyrhizobium japonicum degP gene as part of an operon containing small heat-shock protein genes.</title>
        <authorList>
            <person name="Narberhaus F."/>
            <person name="Weiglhofer W."/>
            <person name="Fischer H.-M."/>
            <person name="Hennecke H."/>
        </authorList>
    </citation>
    <scope>NUCLEOTIDE SEQUENCE [GENOMIC DNA]</scope>
</reference>
<reference key="2">
    <citation type="journal article" date="2002" name="DNA Res.">
        <title>Complete genomic sequence of nitrogen-fixing symbiotic bacterium Bradyrhizobium japonicum USDA110.</title>
        <authorList>
            <person name="Kaneko T."/>
            <person name="Nakamura Y."/>
            <person name="Sato S."/>
            <person name="Minamisawa K."/>
            <person name="Uchiumi T."/>
            <person name="Sasamoto S."/>
            <person name="Watanabe A."/>
            <person name="Idesawa K."/>
            <person name="Iriguchi M."/>
            <person name="Kawashima K."/>
            <person name="Kohara M."/>
            <person name="Matsumoto M."/>
            <person name="Shimpo S."/>
            <person name="Tsuruoka H."/>
            <person name="Wada T."/>
            <person name="Yamada M."/>
            <person name="Tabata S."/>
        </authorList>
    </citation>
    <scope>NUCLEOTIDE SEQUENCE [LARGE SCALE GENOMIC DNA]</scope>
    <source>
        <strain>JCM 10833 / BCRC 13528 / IAM 13628 / NBRC 14792 / USDA 110</strain>
    </source>
</reference>